<keyword id="KW-0963">Cytoplasm</keyword>
<keyword id="KW-0570">Pentose shunt</keyword>
<keyword id="KW-1185">Reference proteome</keyword>
<keyword id="KW-0704">Schiff base</keyword>
<keyword id="KW-0808">Transferase</keyword>
<organism>
    <name type="scientific">Rhizobium etli (strain ATCC 51251 / DSM 11541 / JCM 21823 / NBRC 15573 / CFN 42)</name>
    <dbReference type="NCBI Taxonomy" id="347834"/>
    <lineage>
        <taxon>Bacteria</taxon>
        <taxon>Pseudomonadati</taxon>
        <taxon>Pseudomonadota</taxon>
        <taxon>Alphaproteobacteria</taxon>
        <taxon>Hyphomicrobiales</taxon>
        <taxon>Rhizobiaceae</taxon>
        <taxon>Rhizobium/Agrobacterium group</taxon>
        <taxon>Rhizobium</taxon>
    </lineage>
</organism>
<reference key="1">
    <citation type="journal article" date="2006" name="Proc. Natl. Acad. Sci. U.S.A.">
        <title>The partitioned Rhizobium etli genome: genetic and metabolic redundancy in seven interacting replicons.</title>
        <authorList>
            <person name="Gonzalez V."/>
            <person name="Santamaria R.I."/>
            <person name="Bustos P."/>
            <person name="Hernandez-Gonzalez I."/>
            <person name="Medrano-Soto A."/>
            <person name="Moreno-Hagelsieb G."/>
            <person name="Janga S.C."/>
            <person name="Ramirez M.A."/>
            <person name="Jimenez-Jacinto V."/>
            <person name="Collado-Vides J."/>
            <person name="Davila G."/>
        </authorList>
    </citation>
    <scope>NUCLEOTIDE SEQUENCE [LARGE SCALE GENOMIC DNA]</scope>
    <source>
        <strain>ATCC 51251 / DSM 11541 / JCM 21823 / NBRC 15573 / CFN 42</strain>
    </source>
</reference>
<evidence type="ECO:0000250" key="1"/>
<evidence type="ECO:0000255" key="2">
    <source>
        <dbReference type="HAMAP-Rule" id="MF_00492"/>
    </source>
</evidence>
<proteinExistence type="inferred from homology"/>
<feature type="chain" id="PRO_1000014518" description="Transaldolase">
    <location>
        <begin position="1"/>
        <end position="321"/>
    </location>
</feature>
<feature type="active site" description="Schiff-base intermediate with substrate" evidence="2">
    <location>
        <position position="132"/>
    </location>
</feature>
<name>TAL_RHIEC</name>
<dbReference type="EC" id="2.2.1.2" evidence="2"/>
<dbReference type="EMBL" id="CP000133">
    <property type="protein sequence ID" value="ABC92422.1"/>
    <property type="molecule type" value="Genomic_DNA"/>
</dbReference>
<dbReference type="RefSeq" id="WP_011426880.1">
    <property type="nucleotide sequence ID" value="NC_007761.1"/>
</dbReference>
<dbReference type="SMR" id="Q2K414"/>
<dbReference type="KEGG" id="ret:RHE_CH03667"/>
<dbReference type="eggNOG" id="COG0176">
    <property type="taxonomic scope" value="Bacteria"/>
</dbReference>
<dbReference type="HOGENOM" id="CLU_047470_0_1_5"/>
<dbReference type="OrthoDB" id="9809101at2"/>
<dbReference type="UniPathway" id="UPA00115">
    <property type="reaction ID" value="UER00414"/>
</dbReference>
<dbReference type="Proteomes" id="UP000001936">
    <property type="component" value="Chromosome"/>
</dbReference>
<dbReference type="GO" id="GO:0005829">
    <property type="term" value="C:cytosol"/>
    <property type="evidence" value="ECO:0007669"/>
    <property type="project" value="TreeGrafter"/>
</dbReference>
<dbReference type="GO" id="GO:0004801">
    <property type="term" value="F:transaldolase activity"/>
    <property type="evidence" value="ECO:0000250"/>
    <property type="project" value="UniProtKB"/>
</dbReference>
<dbReference type="GO" id="GO:0005975">
    <property type="term" value="P:carbohydrate metabolic process"/>
    <property type="evidence" value="ECO:0007669"/>
    <property type="project" value="InterPro"/>
</dbReference>
<dbReference type="GO" id="GO:0006098">
    <property type="term" value="P:pentose-phosphate shunt"/>
    <property type="evidence" value="ECO:0007669"/>
    <property type="project" value="UniProtKB-UniRule"/>
</dbReference>
<dbReference type="CDD" id="cd00957">
    <property type="entry name" value="Transaldolase_TalAB"/>
    <property type="match status" value="1"/>
</dbReference>
<dbReference type="FunFam" id="3.20.20.70:FF:000131">
    <property type="entry name" value="Transaldolase"/>
    <property type="match status" value="1"/>
</dbReference>
<dbReference type="Gene3D" id="3.20.20.70">
    <property type="entry name" value="Aldolase class I"/>
    <property type="match status" value="1"/>
</dbReference>
<dbReference type="HAMAP" id="MF_00492">
    <property type="entry name" value="Transaldolase_1"/>
    <property type="match status" value="1"/>
</dbReference>
<dbReference type="InterPro" id="IPR013785">
    <property type="entry name" value="Aldolase_TIM"/>
</dbReference>
<dbReference type="InterPro" id="IPR001585">
    <property type="entry name" value="TAL/FSA"/>
</dbReference>
<dbReference type="InterPro" id="IPR004730">
    <property type="entry name" value="Transaldolase_1"/>
</dbReference>
<dbReference type="InterPro" id="IPR018225">
    <property type="entry name" value="Transaldolase_AS"/>
</dbReference>
<dbReference type="NCBIfam" id="NF009001">
    <property type="entry name" value="PRK12346.1"/>
    <property type="match status" value="1"/>
</dbReference>
<dbReference type="NCBIfam" id="TIGR00874">
    <property type="entry name" value="talAB"/>
    <property type="match status" value="1"/>
</dbReference>
<dbReference type="PANTHER" id="PTHR10683">
    <property type="entry name" value="TRANSALDOLASE"/>
    <property type="match status" value="1"/>
</dbReference>
<dbReference type="PANTHER" id="PTHR10683:SF18">
    <property type="entry name" value="TRANSALDOLASE"/>
    <property type="match status" value="1"/>
</dbReference>
<dbReference type="Pfam" id="PF00923">
    <property type="entry name" value="TAL_FSA"/>
    <property type="match status" value="1"/>
</dbReference>
<dbReference type="SUPFAM" id="SSF51569">
    <property type="entry name" value="Aldolase"/>
    <property type="match status" value="1"/>
</dbReference>
<dbReference type="PROSITE" id="PS01054">
    <property type="entry name" value="TRANSALDOLASE_1"/>
    <property type="match status" value="1"/>
</dbReference>
<dbReference type="PROSITE" id="PS00958">
    <property type="entry name" value="TRANSALDOLASE_2"/>
    <property type="match status" value="1"/>
</dbReference>
<comment type="function">
    <text evidence="2">Transaldolase is important for the balance of metabolites in the pentose-phosphate pathway.</text>
</comment>
<comment type="catalytic activity">
    <reaction evidence="2">
        <text>D-sedoheptulose 7-phosphate + D-glyceraldehyde 3-phosphate = D-erythrose 4-phosphate + beta-D-fructose 6-phosphate</text>
        <dbReference type="Rhea" id="RHEA:17053"/>
        <dbReference type="ChEBI" id="CHEBI:16897"/>
        <dbReference type="ChEBI" id="CHEBI:57483"/>
        <dbReference type="ChEBI" id="CHEBI:57634"/>
        <dbReference type="ChEBI" id="CHEBI:59776"/>
        <dbReference type="EC" id="2.2.1.2"/>
    </reaction>
</comment>
<comment type="pathway">
    <text evidence="2">Carbohydrate degradation; pentose phosphate pathway; D-glyceraldehyde 3-phosphate and beta-D-fructose 6-phosphate from D-ribose 5-phosphate and D-xylulose 5-phosphate (non-oxidative stage): step 2/3.</text>
</comment>
<comment type="subunit">
    <text evidence="1">Homodimer.</text>
</comment>
<comment type="subcellular location">
    <subcellularLocation>
        <location evidence="2">Cytoplasm</location>
    </subcellularLocation>
</comment>
<comment type="similarity">
    <text evidence="2">Belongs to the transaldolase family. Type 1 subfamily.</text>
</comment>
<gene>
    <name evidence="2" type="primary">tal</name>
    <name type="ordered locus">RHE_CH03667</name>
</gene>
<protein>
    <recommendedName>
        <fullName evidence="2">Transaldolase</fullName>
        <ecNumber evidence="2">2.2.1.2</ecNumber>
    </recommendedName>
</protein>
<sequence>MTSKLDQLREITTVVADTGDIEAVARLKPVDCTTNPSIVLKALGTPMFADAIKEAVAWGKKQGGNPDAVSSAVADRLAISVGAALVKLVPGRVSTEVDADLSFDTEASLAKARSIIAAYKDRGIDRDRILIKLASTWEGIRAAEVLQKEGIDCNLTLLFSKAQAIACADAKVFLISPFVGRILDWYKKSTGKDYTAEEDPGVISVREIYNYYKANDIKTIVMGASFRNAGEIEALAGCDRLTISPALLDELSKDDGKLERKLSPESRKPDAKVSVDEKTFRWMMNEDAMATEKLAEGIRAFAKDLTTLRTMVQKELQLAAA</sequence>
<accession>Q2K414</accession>